<keyword id="KW-0963">Cytoplasm</keyword>
<keyword id="KW-0269">Exonuclease</keyword>
<keyword id="KW-0378">Hydrolase</keyword>
<keyword id="KW-0540">Nuclease</keyword>
<keyword id="KW-1185">Reference proteome</keyword>
<keyword id="KW-0694">RNA-binding</keyword>
<feature type="chain" id="PRO_0000166390" description="Exoribonuclease 2">
    <location>
        <begin position="1"/>
        <end position="678"/>
    </location>
</feature>
<feature type="domain" description="RNB" evidence="1">
    <location>
        <begin position="193"/>
        <end position="521"/>
    </location>
</feature>
<feature type="domain" description="S1 motif" evidence="2">
    <location>
        <begin position="568"/>
        <end position="650"/>
    </location>
</feature>
<feature type="region of interest" description="Disordered" evidence="3">
    <location>
        <begin position="659"/>
        <end position="678"/>
    </location>
</feature>
<organism>
    <name type="scientific">Vibrio cholerae serotype O1 (strain ATCC 39315 / El Tor Inaba N16961)</name>
    <dbReference type="NCBI Taxonomy" id="243277"/>
    <lineage>
        <taxon>Bacteria</taxon>
        <taxon>Pseudomonadati</taxon>
        <taxon>Pseudomonadota</taxon>
        <taxon>Gammaproteobacteria</taxon>
        <taxon>Vibrionales</taxon>
        <taxon>Vibrionaceae</taxon>
        <taxon>Vibrio</taxon>
    </lineage>
</organism>
<protein>
    <recommendedName>
        <fullName evidence="2">Exoribonuclease 2</fullName>
        <ecNumber evidence="2">3.1.13.1</ecNumber>
    </recommendedName>
    <alternativeName>
        <fullName evidence="2">Exoribonuclease II</fullName>
        <shortName evidence="2">RNase II</shortName>
        <shortName evidence="2">Ribonuclease II</shortName>
    </alternativeName>
</protein>
<name>RNB_VIBCH</name>
<gene>
    <name evidence="2" type="primary">rnb</name>
    <name type="ordered locus">VC_A0805</name>
</gene>
<dbReference type="EC" id="3.1.13.1" evidence="2"/>
<dbReference type="EMBL" id="AE003853">
    <property type="protein sequence ID" value="AAF96703.1"/>
    <property type="molecule type" value="Genomic_DNA"/>
</dbReference>
<dbReference type="PIR" id="D82415">
    <property type="entry name" value="D82415"/>
</dbReference>
<dbReference type="RefSeq" id="NP_233191.1">
    <property type="nucleotide sequence ID" value="NC_002506.1"/>
</dbReference>
<dbReference type="RefSeq" id="WP_000484954.1">
    <property type="nucleotide sequence ID" value="NZ_LT906615.1"/>
</dbReference>
<dbReference type="SMR" id="Q9KLE1"/>
<dbReference type="STRING" id="243277.VC_A0805"/>
<dbReference type="DNASU" id="2612319"/>
<dbReference type="EnsemblBacteria" id="AAF96703">
    <property type="protein sequence ID" value="AAF96703"/>
    <property type="gene ID" value="VC_A0805"/>
</dbReference>
<dbReference type="KEGG" id="vch:VC_A0805"/>
<dbReference type="PATRIC" id="fig|243277.26.peg.3426"/>
<dbReference type="eggNOG" id="COG4776">
    <property type="taxonomic scope" value="Bacteria"/>
</dbReference>
<dbReference type="HOGENOM" id="CLU_002333_7_3_6"/>
<dbReference type="Proteomes" id="UP000000584">
    <property type="component" value="Chromosome 2"/>
</dbReference>
<dbReference type="GO" id="GO:0005829">
    <property type="term" value="C:cytosol"/>
    <property type="evidence" value="ECO:0000318"/>
    <property type="project" value="GO_Central"/>
</dbReference>
<dbReference type="GO" id="GO:0008859">
    <property type="term" value="F:exoribonuclease II activity"/>
    <property type="evidence" value="ECO:0007669"/>
    <property type="project" value="UniProtKB-UniRule"/>
</dbReference>
<dbReference type="GO" id="GO:0003723">
    <property type="term" value="F:RNA binding"/>
    <property type="evidence" value="ECO:0007669"/>
    <property type="project" value="UniProtKB-KW"/>
</dbReference>
<dbReference type="GO" id="GO:0006402">
    <property type="term" value="P:mRNA catabolic process"/>
    <property type="evidence" value="ECO:0000318"/>
    <property type="project" value="GO_Central"/>
</dbReference>
<dbReference type="Gene3D" id="2.40.50.640">
    <property type="match status" value="1"/>
</dbReference>
<dbReference type="Gene3D" id="2.40.50.140">
    <property type="entry name" value="Nucleic acid-binding proteins"/>
    <property type="match status" value="2"/>
</dbReference>
<dbReference type="HAMAP" id="MF_01036">
    <property type="entry name" value="RNase_II"/>
    <property type="match status" value="1"/>
</dbReference>
<dbReference type="InterPro" id="IPR011129">
    <property type="entry name" value="CSD"/>
</dbReference>
<dbReference type="InterPro" id="IPR012340">
    <property type="entry name" value="NA-bd_OB-fold"/>
</dbReference>
<dbReference type="InterPro" id="IPR013223">
    <property type="entry name" value="RNase_B_OB_dom"/>
</dbReference>
<dbReference type="InterPro" id="IPR011804">
    <property type="entry name" value="RNase_II"/>
</dbReference>
<dbReference type="InterPro" id="IPR001900">
    <property type="entry name" value="RNase_II/R"/>
</dbReference>
<dbReference type="InterPro" id="IPR022966">
    <property type="entry name" value="RNase_II/R_CS"/>
</dbReference>
<dbReference type="InterPro" id="IPR004476">
    <property type="entry name" value="RNase_II/RNase_R"/>
</dbReference>
<dbReference type="InterPro" id="IPR050180">
    <property type="entry name" value="RNR_Ribonuclease"/>
</dbReference>
<dbReference type="InterPro" id="IPR003029">
    <property type="entry name" value="S1_domain"/>
</dbReference>
<dbReference type="NCBIfam" id="TIGR00358">
    <property type="entry name" value="3_prime_RNase"/>
    <property type="match status" value="1"/>
</dbReference>
<dbReference type="NCBIfam" id="NF003455">
    <property type="entry name" value="PRK05054.1"/>
    <property type="match status" value="1"/>
</dbReference>
<dbReference type="NCBIfam" id="TIGR02062">
    <property type="entry name" value="RNase_B"/>
    <property type="match status" value="1"/>
</dbReference>
<dbReference type="PANTHER" id="PTHR23355:SF37">
    <property type="entry name" value="EXORIBONUCLEASE 2"/>
    <property type="match status" value="1"/>
</dbReference>
<dbReference type="PANTHER" id="PTHR23355">
    <property type="entry name" value="RIBONUCLEASE"/>
    <property type="match status" value="1"/>
</dbReference>
<dbReference type="Pfam" id="PF08206">
    <property type="entry name" value="OB_RNB"/>
    <property type="match status" value="1"/>
</dbReference>
<dbReference type="Pfam" id="PF00773">
    <property type="entry name" value="RNB"/>
    <property type="match status" value="1"/>
</dbReference>
<dbReference type="Pfam" id="PF00575">
    <property type="entry name" value="S1"/>
    <property type="match status" value="1"/>
</dbReference>
<dbReference type="SMART" id="SM00357">
    <property type="entry name" value="CSP"/>
    <property type="match status" value="1"/>
</dbReference>
<dbReference type="SMART" id="SM00955">
    <property type="entry name" value="RNB"/>
    <property type="match status" value="1"/>
</dbReference>
<dbReference type="SUPFAM" id="SSF50249">
    <property type="entry name" value="Nucleic acid-binding proteins"/>
    <property type="match status" value="4"/>
</dbReference>
<dbReference type="PROSITE" id="PS01175">
    <property type="entry name" value="RIBONUCLEASE_II"/>
    <property type="match status" value="1"/>
</dbReference>
<evidence type="ECO:0000255" key="1"/>
<evidence type="ECO:0000255" key="2">
    <source>
        <dbReference type="HAMAP-Rule" id="MF_01036"/>
    </source>
</evidence>
<evidence type="ECO:0000256" key="3">
    <source>
        <dbReference type="SAM" id="MobiDB-lite"/>
    </source>
</evidence>
<reference key="1">
    <citation type="journal article" date="2000" name="Nature">
        <title>DNA sequence of both chromosomes of the cholera pathogen Vibrio cholerae.</title>
        <authorList>
            <person name="Heidelberg J.F."/>
            <person name="Eisen J.A."/>
            <person name="Nelson W.C."/>
            <person name="Clayton R.A."/>
            <person name="Gwinn M.L."/>
            <person name="Dodson R.J."/>
            <person name="Haft D.H."/>
            <person name="Hickey E.K."/>
            <person name="Peterson J.D."/>
            <person name="Umayam L.A."/>
            <person name="Gill S.R."/>
            <person name="Nelson K.E."/>
            <person name="Read T.D."/>
            <person name="Tettelin H."/>
            <person name="Richardson D.L."/>
            <person name="Ermolaeva M.D."/>
            <person name="Vamathevan J.J."/>
            <person name="Bass S."/>
            <person name="Qin H."/>
            <person name="Dragoi I."/>
            <person name="Sellers P."/>
            <person name="McDonald L.A."/>
            <person name="Utterback T.R."/>
            <person name="Fleischmann R.D."/>
            <person name="Nierman W.C."/>
            <person name="White O."/>
            <person name="Salzberg S.L."/>
            <person name="Smith H.O."/>
            <person name="Colwell R.R."/>
            <person name="Mekalanos J.J."/>
            <person name="Venter J.C."/>
            <person name="Fraser C.M."/>
        </authorList>
    </citation>
    <scope>NUCLEOTIDE SEQUENCE [LARGE SCALE GENOMIC DNA]</scope>
    <source>
        <strain>ATCC 39315 / El Tor Inaba N16961</strain>
    </source>
</reference>
<accession>Q9KLE1</accession>
<comment type="function">
    <text evidence="2">Involved in mRNA degradation. Hydrolyzes single-stranded polyribonucleotides processively in the 3' to 5' direction.</text>
</comment>
<comment type="catalytic activity">
    <reaction evidence="2">
        <text>Exonucleolytic cleavage in the 3'- to 5'-direction to yield nucleoside 5'-phosphates.</text>
        <dbReference type="EC" id="3.1.13.1"/>
    </reaction>
</comment>
<comment type="subcellular location">
    <subcellularLocation>
        <location evidence="2">Cytoplasm</location>
    </subcellularLocation>
</comment>
<comment type="similarity">
    <text evidence="2">Belongs to the RNR ribonuclease family. RNase II subfamily.</text>
</comment>
<proteinExistence type="inferred from homology"/>
<sequence>MFQDNPLLAQLKQKIQETLPKKEGTIKASDKGFGFLEVDSKTSYFVPPPYMKKCMHGDKVVAFIRTENEREVAEPSELIEQSLTRFIGRVKLFKGKLNVAPDHPQLKKLSLKAKTKKGLNEADFQEGDWVVAHLVRHPLKGDDGFFVQISHKITDANDKIAPWWVTLAENDLPNSEPAGIDDWQLKDDADLVREDLTALPFVTIDGESTKDMDDALYAQQLPNGDFALTIAIADPTAYITPEDEMDKVARERGFTIYLPGRNIPMLPRDLADELCSLMENQVRPALCCSVTIRKDGVIGDDIRFFAANIKSHARLVYDHVSDWLETGSSEQWQPSEEIAQVVRDLYAFSQARANWRETHAVVFPDRPDYRFELSADNDVVAIHADMRRTANRLVEESMITANICAGKTLQTTFGFGVFNTHAGFKAEKMADVVELMAVNGAPNADAETLATVEGFAALRRWLATQETSYLDNRIRKYQSYSEIGNQPLPHFAMGLDVYATWTSPIRKYGDMINHRLLKAHILGKAPVQTPDETVGEELALHRKHHKIAERNVADWLYARTLADEPAKETRFQAEIFDINRPGMRVRLLENGAMAFIPGALILDNKERIECNGEDGTVLIDKEVVYKLGDVLEIVLTEVNQENRSLVGKPTQVFADLVSETQTSAEQPAEGAENNEPQV</sequence>